<comment type="function">
    <text evidence="1">Binds 16S rRNA, required for the assembly of 30S particles and may also be responsible for determining the conformation of the 16S rRNA at the A site.</text>
</comment>
<comment type="subunit">
    <text evidence="1">Part of the 30S ribosomal subunit. Contacts proteins S3 and S10.</text>
</comment>
<comment type="similarity">
    <text evidence="1">Belongs to the universal ribosomal protein uS14 family.</text>
</comment>
<organism>
    <name type="scientific">Staphylococcus aureus (strain USA300)</name>
    <dbReference type="NCBI Taxonomy" id="367830"/>
    <lineage>
        <taxon>Bacteria</taxon>
        <taxon>Bacillati</taxon>
        <taxon>Bacillota</taxon>
        <taxon>Bacilli</taxon>
        <taxon>Bacillales</taxon>
        <taxon>Staphylococcaceae</taxon>
        <taxon>Staphylococcus</taxon>
    </lineage>
</organism>
<accession>Q2FH97</accession>
<name>RS14_STAA3</name>
<reference key="1">
    <citation type="journal article" date="2006" name="Lancet">
        <title>Complete genome sequence of USA300, an epidemic clone of community-acquired meticillin-resistant Staphylococcus aureus.</title>
        <authorList>
            <person name="Diep B.A."/>
            <person name="Gill S.R."/>
            <person name="Chang R.F."/>
            <person name="Phan T.H."/>
            <person name="Chen J.H."/>
            <person name="Davidson M.G."/>
            <person name="Lin F."/>
            <person name="Lin J."/>
            <person name="Carleton H.A."/>
            <person name="Mongodin E.F."/>
            <person name="Sensabaugh G.F."/>
            <person name="Perdreau-Remington F."/>
        </authorList>
    </citation>
    <scope>NUCLEOTIDE SEQUENCE [LARGE SCALE GENOMIC DNA]</scope>
    <source>
        <strain>USA300</strain>
    </source>
</reference>
<sequence length="89" mass="10540">MAKKSKIAKERKREELVNKYYELRKELKAKGDYEALRKLPRDSSPTRLTRRCKVTGRPRGVLRKFEMSRIAFREHAHKGQIPGVKKSSW</sequence>
<feature type="chain" id="PRO_0000269062" description="Small ribosomal subunit protein uS14A">
    <location>
        <begin position="1"/>
        <end position="89"/>
    </location>
</feature>
<keyword id="KW-0687">Ribonucleoprotein</keyword>
<keyword id="KW-0689">Ribosomal protein</keyword>
<keyword id="KW-0694">RNA-binding</keyword>
<keyword id="KW-0699">rRNA-binding</keyword>
<gene>
    <name evidence="1" type="primary">rpsN</name>
    <name type="synonym">rpsN2</name>
    <name type="ordered locus">SAUSA300_1234</name>
</gene>
<protein>
    <recommendedName>
        <fullName evidence="1">Small ribosomal subunit protein uS14A</fullName>
    </recommendedName>
    <alternativeName>
        <fullName evidence="2">30S ribosomal protein S14</fullName>
    </alternativeName>
</protein>
<dbReference type="EMBL" id="CP000255">
    <property type="protein sequence ID" value="ABD21805.1"/>
    <property type="molecule type" value="Genomic_DNA"/>
</dbReference>
<dbReference type="RefSeq" id="WP_001085655.1">
    <property type="nucleotide sequence ID" value="NZ_CP027476.1"/>
</dbReference>
<dbReference type="SMR" id="Q2FH97"/>
<dbReference type="GeneID" id="98345705"/>
<dbReference type="KEGG" id="saa:SAUSA300_1234"/>
<dbReference type="HOGENOM" id="CLU_139869_0_0_9"/>
<dbReference type="Proteomes" id="UP000001939">
    <property type="component" value="Chromosome"/>
</dbReference>
<dbReference type="GO" id="GO:0005737">
    <property type="term" value="C:cytoplasm"/>
    <property type="evidence" value="ECO:0007669"/>
    <property type="project" value="UniProtKB-ARBA"/>
</dbReference>
<dbReference type="GO" id="GO:0015935">
    <property type="term" value="C:small ribosomal subunit"/>
    <property type="evidence" value="ECO:0007669"/>
    <property type="project" value="TreeGrafter"/>
</dbReference>
<dbReference type="GO" id="GO:0019843">
    <property type="term" value="F:rRNA binding"/>
    <property type="evidence" value="ECO:0007669"/>
    <property type="project" value="UniProtKB-UniRule"/>
</dbReference>
<dbReference type="GO" id="GO:0003735">
    <property type="term" value="F:structural constituent of ribosome"/>
    <property type="evidence" value="ECO:0007669"/>
    <property type="project" value="InterPro"/>
</dbReference>
<dbReference type="GO" id="GO:0006412">
    <property type="term" value="P:translation"/>
    <property type="evidence" value="ECO:0007669"/>
    <property type="project" value="UniProtKB-UniRule"/>
</dbReference>
<dbReference type="FunFam" id="4.10.830.10:FF:000003">
    <property type="entry name" value="30S ribosomal protein S14"/>
    <property type="match status" value="1"/>
</dbReference>
<dbReference type="Gene3D" id="4.10.830.10">
    <property type="entry name" value="30s Ribosomal Protein S14, Chain N"/>
    <property type="match status" value="1"/>
</dbReference>
<dbReference type="HAMAP" id="MF_00537">
    <property type="entry name" value="Ribosomal_uS14_1"/>
    <property type="match status" value="1"/>
</dbReference>
<dbReference type="InterPro" id="IPR001209">
    <property type="entry name" value="Ribosomal_uS14"/>
</dbReference>
<dbReference type="InterPro" id="IPR023036">
    <property type="entry name" value="Ribosomal_uS14_bac/plastid"/>
</dbReference>
<dbReference type="InterPro" id="IPR018271">
    <property type="entry name" value="Ribosomal_uS14_CS"/>
</dbReference>
<dbReference type="InterPro" id="IPR043140">
    <property type="entry name" value="Ribosomal_uS14_sf"/>
</dbReference>
<dbReference type="NCBIfam" id="NF006477">
    <property type="entry name" value="PRK08881.1"/>
    <property type="match status" value="1"/>
</dbReference>
<dbReference type="PANTHER" id="PTHR19836">
    <property type="entry name" value="30S RIBOSOMAL PROTEIN S14"/>
    <property type="match status" value="1"/>
</dbReference>
<dbReference type="PANTHER" id="PTHR19836:SF19">
    <property type="entry name" value="SMALL RIBOSOMAL SUBUNIT PROTEIN US14M"/>
    <property type="match status" value="1"/>
</dbReference>
<dbReference type="Pfam" id="PF00253">
    <property type="entry name" value="Ribosomal_S14"/>
    <property type="match status" value="1"/>
</dbReference>
<dbReference type="SUPFAM" id="SSF57716">
    <property type="entry name" value="Glucocorticoid receptor-like (DNA-binding domain)"/>
    <property type="match status" value="1"/>
</dbReference>
<dbReference type="PROSITE" id="PS00527">
    <property type="entry name" value="RIBOSOMAL_S14"/>
    <property type="match status" value="1"/>
</dbReference>
<proteinExistence type="inferred from homology"/>
<evidence type="ECO:0000255" key="1">
    <source>
        <dbReference type="HAMAP-Rule" id="MF_00537"/>
    </source>
</evidence>
<evidence type="ECO:0000305" key="2"/>